<proteinExistence type="evidence at transcript level"/>
<organism>
    <name type="scientific">Gallus gallus</name>
    <name type="common">Chicken</name>
    <dbReference type="NCBI Taxonomy" id="9031"/>
    <lineage>
        <taxon>Eukaryota</taxon>
        <taxon>Metazoa</taxon>
        <taxon>Chordata</taxon>
        <taxon>Craniata</taxon>
        <taxon>Vertebrata</taxon>
        <taxon>Euteleostomi</taxon>
        <taxon>Archelosauria</taxon>
        <taxon>Archosauria</taxon>
        <taxon>Dinosauria</taxon>
        <taxon>Saurischia</taxon>
        <taxon>Theropoda</taxon>
        <taxon>Coelurosauria</taxon>
        <taxon>Aves</taxon>
        <taxon>Neognathae</taxon>
        <taxon>Galloanserae</taxon>
        <taxon>Galliformes</taxon>
        <taxon>Phasianidae</taxon>
        <taxon>Phasianinae</taxon>
        <taxon>Gallus</taxon>
    </lineage>
</organism>
<name>CHMP7_CHICK</name>
<reference key="1">
    <citation type="journal article" date="2005" name="Genome Biol.">
        <title>Full-length cDNAs from chicken bursal lymphocytes to facilitate gene function analysis.</title>
        <authorList>
            <person name="Caldwell R.B."/>
            <person name="Kierzek A.M."/>
            <person name="Arakawa H."/>
            <person name="Bezzubov Y."/>
            <person name="Zaim J."/>
            <person name="Fiedler P."/>
            <person name="Kutter S."/>
            <person name="Blagodatski A."/>
            <person name="Kostovska D."/>
            <person name="Koter M."/>
            <person name="Plachy J."/>
            <person name="Carninci P."/>
            <person name="Hayashizaki Y."/>
            <person name="Buerstedde J.-M."/>
        </authorList>
    </citation>
    <scope>NUCLEOTIDE SEQUENCE [LARGE SCALE MRNA]</scope>
    <source>
        <strain>CB</strain>
        <tissue>Bursa of Fabricius</tissue>
    </source>
</reference>
<keyword id="KW-0175">Coiled coil</keyword>
<keyword id="KW-0963">Cytoplasm</keyword>
<keyword id="KW-0539">Nucleus</keyword>
<keyword id="KW-0653">Protein transport</keyword>
<keyword id="KW-1185">Reference proteome</keyword>
<keyword id="KW-0813">Transport</keyword>
<accession>Q5ZJB7</accession>
<dbReference type="EMBL" id="AJ720517">
    <property type="protein sequence ID" value="CAG32176.1"/>
    <property type="molecule type" value="mRNA"/>
</dbReference>
<dbReference type="RefSeq" id="NP_001006306.1">
    <property type="nucleotide sequence ID" value="NM_001006306.3"/>
</dbReference>
<dbReference type="SMR" id="Q5ZJB7"/>
<dbReference type="FunCoup" id="Q5ZJB7">
    <property type="interactions" value="1800"/>
</dbReference>
<dbReference type="STRING" id="9031.ENSGALP00000000556"/>
<dbReference type="PaxDb" id="9031-ENSGALP00000000556"/>
<dbReference type="GeneID" id="419535"/>
<dbReference type="KEGG" id="gga:419535"/>
<dbReference type="CTD" id="91782"/>
<dbReference type="VEuPathDB" id="HostDB:geneid_419535"/>
<dbReference type="eggNOG" id="KOG2911">
    <property type="taxonomic scope" value="Eukaryota"/>
</dbReference>
<dbReference type="HOGENOM" id="CLU_044768_0_0_1"/>
<dbReference type="InParanoid" id="Q5ZJB7"/>
<dbReference type="OMA" id="LQLQFMR"/>
<dbReference type="OrthoDB" id="10250120at2759"/>
<dbReference type="PhylomeDB" id="Q5ZJB7"/>
<dbReference type="Reactome" id="R-GGA-1632852">
    <property type="pathway name" value="Macroautophagy"/>
</dbReference>
<dbReference type="Reactome" id="R-GGA-5620971">
    <property type="pathway name" value="Pyroptosis"/>
</dbReference>
<dbReference type="Reactome" id="R-GGA-917729">
    <property type="pathway name" value="Endosomal Sorting Complex Required For Transport (ESCRT)"/>
</dbReference>
<dbReference type="Reactome" id="R-GGA-9668328">
    <property type="pathway name" value="Sealing of the nuclear envelope (NE) by ESCRT-III"/>
</dbReference>
<dbReference type="PRO" id="PR:Q5ZJB7"/>
<dbReference type="Proteomes" id="UP000000539">
    <property type="component" value="Chromosome 22"/>
</dbReference>
<dbReference type="Bgee" id="ENSGALG00000000409">
    <property type="expression patterns" value="Expressed in skeletal muscle tissue and 13 other cell types or tissues"/>
</dbReference>
<dbReference type="GO" id="GO:0009898">
    <property type="term" value="C:cytoplasmic side of plasma membrane"/>
    <property type="evidence" value="ECO:0000318"/>
    <property type="project" value="GO_Central"/>
</dbReference>
<dbReference type="GO" id="GO:0000815">
    <property type="term" value="C:ESCRT III complex"/>
    <property type="evidence" value="ECO:0000250"/>
    <property type="project" value="UniProtKB"/>
</dbReference>
<dbReference type="GO" id="GO:0005771">
    <property type="term" value="C:multivesicular body"/>
    <property type="evidence" value="ECO:0000318"/>
    <property type="project" value="GO_Central"/>
</dbReference>
<dbReference type="GO" id="GO:0005635">
    <property type="term" value="C:nuclear envelope"/>
    <property type="evidence" value="ECO:0000250"/>
    <property type="project" value="UniProtKB"/>
</dbReference>
<dbReference type="GO" id="GO:0010458">
    <property type="term" value="P:exit from mitosis"/>
    <property type="evidence" value="ECO:0000250"/>
    <property type="project" value="UniProtKB"/>
</dbReference>
<dbReference type="GO" id="GO:0045324">
    <property type="term" value="P:late endosome to vacuole transport"/>
    <property type="evidence" value="ECO:0000250"/>
    <property type="project" value="UniProtKB"/>
</dbReference>
<dbReference type="GO" id="GO:0032511">
    <property type="term" value="P:late endosome to vacuole transport via multivesicular body sorting pathway"/>
    <property type="evidence" value="ECO:0000318"/>
    <property type="project" value="GO_Central"/>
</dbReference>
<dbReference type="GO" id="GO:0031468">
    <property type="term" value="P:nuclear membrane reassembly"/>
    <property type="evidence" value="ECO:0000250"/>
    <property type="project" value="UniProtKB"/>
</dbReference>
<dbReference type="GO" id="GO:0015031">
    <property type="term" value="P:protein transport"/>
    <property type="evidence" value="ECO:0007669"/>
    <property type="project" value="UniProtKB-KW"/>
</dbReference>
<dbReference type="GO" id="GO:0006900">
    <property type="term" value="P:vesicle budding from membrane"/>
    <property type="evidence" value="ECO:0000318"/>
    <property type="project" value="GO_Central"/>
</dbReference>
<dbReference type="FunFam" id="1.10.287.1060:FF:000007">
    <property type="entry name" value="Charged multivesicular body protein 7"/>
    <property type="match status" value="1"/>
</dbReference>
<dbReference type="Gene3D" id="1.10.287.1060">
    <property type="entry name" value="ESAT-6-like"/>
    <property type="match status" value="1"/>
</dbReference>
<dbReference type="InterPro" id="IPR005024">
    <property type="entry name" value="Snf7_fam"/>
</dbReference>
<dbReference type="PANTHER" id="PTHR22761">
    <property type="entry name" value="CHARGED MULTIVESICULAR BODY PROTEIN"/>
    <property type="match status" value="1"/>
</dbReference>
<dbReference type="PANTHER" id="PTHR22761:SF21">
    <property type="entry name" value="CHARGED MULTIVESICULAR BODY PROTEIN 7"/>
    <property type="match status" value="1"/>
</dbReference>
<dbReference type="Pfam" id="PF03357">
    <property type="entry name" value="Snf7"/>
    <property type="match status" value="1"/>
</dbReference>
<dbReference type="Pfam" id="PF25239">
    <property type="entry name" value="WHD_CHMP7"/>
    <property type="match status" value="1"/>
</dbReference>
<feature type="chain" id="PRO_0000211519" description="Charged multivesicular body protein 7">
    <location>
        <begin position="1"/>
        <end position="448"/>
    </location>
</feature>
<feature type="region of interest" description="Disordered" evidence="3">
    <location>
        <begin position="1"/>
        <end position="20"/>
    </location>
</feature>
<feature type="coiled-coil region" evidence="2">
    <location>
        <begin position="241"/>
        <end position="392"/>
    </location>
</feature>
<feature type="compositionally biased region" description="Pro residues" evidence="3">
    <location>
        <begin position="1"/>
        <end position="12"/>
    </location>
</feature>
<protein>
    <recommendedName>
        <fullName>Charged multivesicular body protein 7</fullName>
    </recommendedName>
    <alternativeName>
        <fullName>Chromatin-modifying protein 7</fullName>
    </alternativeName>
</protein>
<sequence>MCSPGRAPPGPAPAGDLPPEWETDDERMAFLFSAFKQSREVNSTEWDSKMAFWVGLVLARGRRRGVVRTCLRELQNGFERRGSVPLGLGTVLRELLRRGKMQRESDFMASVDSSWISWGVGVFILKPLKWTLSSVLGDSKVPEEEEVLIYVELLQEKAEEVYRLYQNSVLSSHPVVALSELRSLCAGVCPDERTFYLLLLQLQKEKKVTILEQNGEKIVKFARGLHAKVSPMNDVDIGVYQLMQSEQLLSQKVESLSQEAEKCKDDARSACRAGKKQLALRCLKSKRRTERRIEELHSKLDAVQGILDRIYASQTDQMVFNAYQAGVGALKLSMKDVTVEKAENLVDQIQELCDTQDEVAQTLAGAGVNGLEMDSEELEKELDSLLQDSAKEPVHLHPVPQKDSGFAGAISDAELEAELEKLSVCDGDLAQKTPSASSEPQTALGLNL</sequence>
<comment type="function">
    <text evidence="1">ESCRT-III-like protein required to recruit the ESCRT-III complex to the nuclear envelope (NE) during late anaphase (By similarity). Together with SPAST, the ESCRT-III complex promotes NE sealing and mitotic spindle disassembly during late anaphase (By similarity). Recruited to the reforming NE during anaphase by LEMD2 (By similarity). Plays a role in the endosomal sorting pathway (By similarity).</text>
</comment>
<comment type="subcellular location">
    <subcellularLocation>
        <location evidence="1">Cytoplasm</location>
    </subcellularLocation>
    <subcellularLocation>
        <location evidence="1">Nucleus envelope</location>
    </subcellularLocation>
    <text evidence="1">Diffused localization, with some punctate distribution, especially in the perinuclear area. Localizes to the reforming nuclear envelope on chromatin disks during late anaphase.</text>
</comment>
<comment type="similarity">
    <text evidence="4">Belongs to the SNF7 family.</text>
</comment>
<evidence type="ECO:0000250" key="1">
    <source>
        <dbReference type="UniProtKB" id="Q8WUX9"/>
    </source>
</evidence>
<evidence type="ECO:0000255" key="2"/>
<evidence type="ECO:0000256" key="3">
    <source>
        <dbReference type="SAM" id="MobiDB-lite"/>
    </source>
</evidence>
<evidence type="ECO:0000305" key="4"/>
<gene>
    <name type="primary">CHMP7</name>
    <name type="ORF">RCJMB04_19g23</name>
</gene>